<organism>
    <name type="scientific">Methanoregula boonei (strain DSM 21154 / JCM 14090 / 6A8)</name>
    <dbReference type="NCBI Taxonomy" id="456442"/>
    <lineage>
        <taxon>Archaea</taxon>
        <taxon>Methanobacteriati</taxon>
        <taxon>Methanobacteriota</taxon>
        <taxon>Stenosarchaea group</taxon>
        <taxon>Methanomicrobia</taxon>
        <taxon>Methanomicrobiales</taxon>
        <taxon>Methanoregulaceae</taxon>
        <taxon>Methanoregula</taxon>
    </lineage>
</organism>
<evidence type="ECO:0000255" key="1">
    <source>
        <dbReference type="HAMAP-Rule" id="MF_00700"/>
    </source>
</evidence>
<sequence length="374" mass="41592">MNPATTEFVRQRFAEYYRKAMLVSPSSLAQREWGFVLFNPGAAELRMRRHIAFPERTELFDYIRNLVPSHVYYSSAYYEKPDAPTMAEKGWCGADLIFDLDADHIVKGPYDQMLSRVKTETEKLLAMLTEELGIDSKQIELVFSGGRGYHVHVRDLAFRGWGSAERRELVDYICGIGIDPAVLLNGGLVPGWPARFRSALAEYIGWLGTLSEDGAMAHLTSLEGVGKESAAGFLKKRAEILAGLSGEIDPTLLKDRVIKAVVHETEGEFRKRLNEKAALADEPVTTDIKRLIRMPTSIHGGSGMRVQPLELRDLPDFDPLVDAVVFSAREVRVDARFPLAMPMLGSTYQIQKGISTVPEAVGVFLCCRGIAEIA</sequence>
<proteinExistence type="inferred from homology"/>
<accession>A7I9Q9</accession>
<gene>
    <name evidence="1" type="primary">priS</name>
    <name type="synonym">priA</name>
    <name type="ordered locus">Mboo_1955</name>
</gene>
<feature type="chain" id="PRO_1000045500" description="DNA primase small subunit PriS">
    <location>
        <begin position="1"/>
        <end position="374"/>
    </location>
</feature>
<feature type="active site" evidence="1">
    <location>
        <position position="99"/>
    </location>
</feature>
<feature type="active site" evidence="1">
    <location>
        <position position="101"/>
    </location>
</feature>
<feature type="active site" evidence="1">
    <location>
        <position position="281"/>
    </location>
</feature>
<dbReference type="EC" id="2.7.7.-" evidence="1"/>
<dbReference type="EMBL" id="CP000780">
    <property type="protein sequence ID" value="ABS56470.1"/>
    <property type="molecule type" value="Genomic_DNA"/>
</dbReference>
<dbReference type="RefSeq" id="WP_012107525.1">
    <property type="nucleotide sequence ID" value="NC_009712.1"/>
</dbReference>
<dbReference type="SMR" id="A7I9Q9"/>
<dbReference type="STRING" id="456442.Mboo_1955"/>
<dbReference type="GeneID" id="5409992"/>
<dbReference type="KEGG" id="mbn:Mboo_1955"/>
<dbReference type="eggNOG" id="arCOG04110">
    <property type="taxonomic scope" value="Archaea"/>
</dbReference>
<dbReference type="HOGENOM" id="CLU_056123_1_0_2"/>
<dbReference type="OrthoDB" id="31125at2157"/>
<dbReference type="Proteomes" id="UP000002408">
    <property type="component" value="Chromosome"/>
</dbReference>
<dbReference type="GO" id="GO:0000428">
    <property type="term" value="C:DNA-directed RNA polymerase complex"/>
    <property type="evidence" value="ECO:0007669"/>
    <property type="project" value="UniProtKB-KW"/>
</dbReference>
<dbReference type="GO" id="GO:1990077">
    <property type="term" value="C:primosome complex"/>
    <property type="evidence" value="ECO:0007669"/>
    <property type="project" value="UniProtKB-KW"/>
</dbReference>
<dbReference type="GO" id="GO:0003899">
    <property type="term" value="F:DNA-directed RNA polymerase activity"/>
    <property type="evidence" value="ECO:0007669"/>
    <property type="project" value="InterPro"/>
</dbReference>
<dbReference type="GO" id="GO:0046872">
    <property type="term" value="F:metal ion binding"/>
    <property type="evidence" value="ECO:0007669"/>
    <property type="project" value="UniProtKB-KW"/>
</dbReference>
<dbReference type="GO" id="GO:0006269">
    <property type="term" value="P:DNA replication, synthesis of primer"/>
    <property type="evidence" value="ECO:0007669"/>
    <property type="project" value="UniProtKB-UniRule"/>
</dbReference>
<dbReference type="CDD" id="cd04860">
    <property type="entry name" value="AE_Prim_S"/>
    <property type="match status" value="1"/>
</dbReference>
<dbReference type="Gene3D" id="3.90.920.10">
    <property type="entry name" value="DNA primase, PRIM domain"/>
    <property type="match status" value="1"/>
</dbReference>
<dbReference type="HAMAP" id="MF_00700">
    <property type="entry name" value="DNA_primase_sml_arc"/>
    <property type="match status" value="1"/>
</dbReference>
<dbReference type="InterPro" id="IPR002755">
    <property type="entry name" value="DNA_primase_S"/>
</dbReference>
<dbReference type="InterPro" id="IPR014052">
    <property type="entry name" value="DNA_primase_ssu_euk/arc"/>
</dbReference>
<dbReference type="InterPro" id="IPR023639">
    <property type="entry name" value="DNA_primase_ssu_PriS"/>
</dbReference>
<dbReference type="PANTHER" id="PTHR10536">
    <property type="entry name" value="DNA PRIMASE SMALL SUBUNIT"/>
    <property type="match status" value="1"/>
</dbReference>
<dbReference type="Pfam" id="PF01896">
    <property type="entry name" value="DNA_primase_S"/>
    <property type="match status" value="1"/>
</dbReference>
<dbReference type="SUPFAM" id="SSF56747">
    <property type="entry name" value="Prim-pol domain"/>
    <property type="match status" value="1"/>
</dbReference>
<reference key="1">
    <citation type="journal article" date="2015" name="Microbiology">
        <title>Genome of Methanoregula boonei 6A8 reveals adaptations to oligotrophic peatland environments.</title>
        <authorList>
            <person name="Braeuer S."/>
            <person name="Cadillo-Quiroz H."/>
            <person name="Kyrpides N."/>
            <person name="Woyke T."/>
            <person name="Goodwin L."/>
            <person name="Detter C."/>
            <person name="Podell S."/>
            <person name="Yavitt J.B."/>
            <person name="Zinder S.H."/>
        </authorList>
    </citation>
    <scope>NUCLEOTIDE SEQUENCE [LARGE SCALE GENOMIC DNA]</scope>
    <source>
        <strain>DSM 21154 / JCM 14090 / 6A8</strain>
    </source>
</reference>
<protein>
    <recommendedName>
        <fullName evidence="1">DNA primase small subunit PriS</fullName>
        <ecNumber evidence="1">2.7.7.-</ecNumber>
    </recommendedName>
</protein>
<comment type="function">
    <text evidence="1">Catalytic subunit of DNA primase, an RNA polymerase that catalyzes the synthesis of short RNA molecules used as primers for DNA polymerase during DNA replication. The small subunit contains the primase catalytic core and has DNA synthesis activity on its own. Binding to the large subunit stabilizes and modulates the activity, increasing the rate of DNA synthesis while decreasing the length of the DNA fragments, and conferring RNA synthesis capability. The DNA polymerase activity may enable DNA primase to also catalyze primer extension after primer synthesis. May also play a role in DNA repair.</text>
</comment>
<comment type="cofactor">
    <cofactor evidence="1">
        <name>Mg(2+)</name>
        <dbReference type="ChEBI" id="CHEBI:18420"/>
    </cofactor>
    <cofactor evidence="1">
        <name>Mn(2+)</name>
        <dbReference type="ChEBI" id="CHEBI:29035"/>
    </cofactor>
</comment>
<comment type="subunit">
    <text evidence="1">Heterodimer of a small subunit (PriS) and a large subunit (PriL).</text>
</comment>
<comment type="similarity">
    <text evidence="1">Belongs to the eukaryotic-type primase small subunit family.</text>
</comment>
<keyword id="KW-0235">DNA replication</keyword>
<keyword id="KW-0240">DNA-directed RNA polymerase</keyword>
<keyword id="KW-0460">Magnesium</keyword>
<keyword id="KW-0464">Manganese</keyword>
<keyword id="KW-0479">Metal-binding</keyword>
<keyword id="KW-0548">Nucleotidyltransferase</keyword>
<keyword id="KW-0639">Primosome</keyword>
<keyword id="KW-1185">Reference proteome</keyword>
<keyword id="KW-0804">Transcription</keyword>
<keyword id="KW-0808">Transferase</keyword>
<name>PRIS_METB6</name>